<accession>P36218</accession>
<accession>A0A024RZA6</accession>
<feature type="signal peptide" evidence="3">
    <location>
        <begin position="1"/>
        <end position="19"/>
    </location>
</feature>
<feature type="propeptide" id="PRO_0000436701" evidence="8 10">
    <location>
        <begin position="20"/>
        <end position="51"/>
    </location>
</feature>
<feature type="chain" id="PRO_0000008013" description="Endo-1,4-beta-xylanase 1">
    <location>
        <begin position="52"/>
        <end position="229"/>
    </location>
</feature>
<feature type="domain" description="GH11" evidence="5">
    <location>
        <begin position="52"/>
        <end position="228"/>
    </location>
</feature>
<feature type="active site" description="Nucleophile" evidence="6">
    <location>
        <position position="126"/>
    </location>
</feature>
<feature type="active site" description="Proton donor" evidence="7">
    <location>
        <position position="215"/>
    </location>
</feature>
<feature type="binding site" evidence="2">
    <location>
        <position position="117"/>
    </location>
    <ligand>
        <name>substrate</name>
    </ligand>
</feature>
<feature type="binding site" evidence="2">
    <location>
        <position position="128"/>
    </location>
    <ligand>
        <name>substrate</name>
    </ligand>
</feature>
<feature type="binding site" evidence="2">
    <location>
        <position position="160"/>
    </location>
    <ligand>
        <name>substrate</name>
    </ligand>
</feature>
<feature type="binding site" evidence="2">
    <location>
        <position position="164"/>
    </location>
    <ligand>
        <name>substrate</name>
    </ligand>
</feature>
<feature type="binding site" evidence="2">
    <location>
        <position position="174"/>
    </location>
    <ligand>
        <name>substrate</name>
    </ligand>
</feature>
<feature type="binding site" evidence="2">
    <location>
        <position position="209"/>
    </location>
    <ligand>
        <name>substrate</name>
    </ligand>
</feature>
<feature type="glycosylation site" description="N-linked (GlcNAc...) asparagine" evidence="4">
    <location>
        <position position="31"/>
    </location>
</feature>
<feature type="strand" evidence="16">
    <location>
        <begin position="56"/>
        <end position="61"/>
    </location>
</feature>
<feature type="strand" evidence="16">
    <location>
        <begin position="63"/>
        <end position="70"/>
    </location>
</feature>
<feature type="strand" evidence="16">
    <location>
        <begin position="72"/>
        <end position="83"/>
    </location>
</feature>
<feature type="strand" evidence="16">
    <location>
        <begin position="85"/>
        <end position="93"/>
    </location>
</feature>
<feature type="strand" evidence="16">
    <location>
        <begin position="99"/>
        <end position="121"/>
    </location>
</feature>
<feature type="turn" evidence="16">
    <location>
        <begin position="122"/>
        <end position="124"/>
    </location>
</feature>
<feature type="strand" evidence="16">
    <location>
        <begin position="125"/>
        <end position="135"/>
    </location>
</feature>
<feature type="strand" evidence="16">
    <location>
        <begin position="140"/>
        <end position="148"/>
    </location>
</feature>
<feature type="strand" evidence="16">
    <location>
        <begin position="151"/>
        <end position="165"/>
    </location>
</feature>
<feature type="strand" evidence="16">
    <location>
        <begin position="168"/>
        <end position="181"/>
    </location>
</feature>
<feature type="strand" evidence="16">
    <location>
        <begin position="184"/>
        <end position="188"/>
    </location>
</feature>
<feature type="helix" evidence="16">
    <location>
        <begin position="190"/>
        <end position="199"/>
    </location>
</feature>
<feature type="strand" evidence="16">
    <location>
        <begin position="206"/>
        <end position="228"/>
    </location>
</feature>
<name>XYN1_HYPJR</name>
<reference key="1">
    <citation type="journal article" date="1992" name="Biotechnology (N.Y.)">
        <title>The two major xylanases from Trichoderma reesei: characterization of both enzymes and genes.</title>
        <authorList>
            <person name="Toerroenen A."/>
            <person name="Mach R.L."/>
            <person name="Messner R."/>
            <person name="Gonzalez R."/>
            <person name="Kalkkinen N."/>
            <person name="Harkki A."/>
            <person name="Kubicek C.P."/>
        </authorList>
    </citation>
    <scope>NUCLEOTIDE SEQUENCE [GENOMIC DNA]</scope>
    <scope>PROTEIN SEQUENCE OF 52-63; 118-179 AND 216-225</scope>
    <scope>CATALYTIC ACTIVITY</scope>
    <scope>BIOPHYSICOCHEMICAL PROPERTIES</scope>
    <source>
        <strain>ATCC 56765 / BCRC 32924 / NRRL 11460 / Rut C-30</strain>
    </source>
</reference>
<reference key="2">
    <citation type="journal article" date="2013" name="Ind. Biotechnol.">
        <title>Comparative genomics analysis of Trichoderma reesei strains.</title>
        <authorList>
            <person name="Koike H."/>
            <person name="Aerts A."/>
            <person name="LaButti K."/>
            <person name="Grigoriev I.V."/>
            <person name="Baker S.E."/>
        </authorList>
    </citation>
    <scope>NUCLEOTIDE SEQUENCE [LARGE SCALE GENOMIC DNA]</scope>
    <source>
        <strain>ATCC 56765 / BCRC 32924 / NRRL 11460 / Rut C-30</strain>
    </source>
</reference>
<reference key="3">
    <citation type="journal article" date="1992" name="Enzyme Microb. Technol.">
        <title>Two major xylanases of Trichoderma reesei.</title>
        <authorList>
            <person name="Tenkanen M."/>
            <person name="Puls J."/>
            <person name="Poutanen K."/>
        </authorList>
    </citation>
    <scope>PROTEIN SEQUENCE OF 52-57</scope>
    <scope>CATALYTIC ACTIVITY</scope>
    <scope>BIOPHYSICOCHEMICAL PROPERTIES</scope>
    <scope>SUBCELLULAR LOCATION</scope>
    <source>
        <strain>ATCC 56765 / BCRC 32924 / NRRL 11460 / Rut C-30</strain>
    </source>
</reference>
<reference key="4">
    <citation type="journal article" date="1994" name="FEBS Lett.">
        <title>Stereochemistry of the hydrolysis of glycosidic linkage by endo-beta-1,4-xylanases of Trichoderma reesei.</title>
        <authorList>
            <person name="Biely P."/>
            <person name="Kremnicky L."/>
            <person name="Alfoeldi J."/>
            <person name="Tenkanen M."/>
        </authorList>
    </citation>
    <scope>FUNCTION</scope>
</reference>
<reference key="5">
    <citation type="journal article" date="1995" name="Biochemistry">
        <title>Structural comparison of two major endo-1,4-xylanases from Trichoderma reesei.</title>
        <authorList>
            <person name="Toerroenen A."/>
            <person name="Rouvinen J."/>
        </authorList>
    </citation>
    <scope>X-RAY CRYSTALLOGRAPHY (2.0 ANGSTROMS)</scope>
</reference>
<sequence>MVAFSSLICALTSIASTLAMPTGLEPESSVNVTERGMYDFVLGAHNDHRRRASINYDQNYQTGGQVSYSPSNTGFSVNWNTQDDFVVGVGWTTGSSAPINFGGSFSVNSGTGLLSVYGWSTNPLVEYYIMEDNHNYPAQGTVKGTVTSDGATYTIWENTRVNEPSIQGTATFNQYISVRNSPRTSGTVTVQNHFNAWASLGLHLGQMNYQVVAVEGWGGSGSASQSVSN</sequence>
<keyword id="KW-0002">3D-structure</keyword>
<keyword id="KW-0119">Carbohydrate metabolism</keyword>
<keyword id="KW-0903">Direct protein sequencing</keyword>
<keyword id="KW-0325">Glycoprotein</keyword>
<keyword id="KW-0326">Glycosidase</keyword>
<keyword id="KW-0378">Hydrolase</keyword>
<keyword id="KW-0624">Polysaccharide degradation</keyword>
<keyword id="KW-0964">Secreted</keyword>
<keyword id="KW-0732">Signal</keyword>
<keyword id="KW-0858">Xylan degradation</keyword>
<protein>
    <recommendedName>
        <fullName evidence="11">Endo-1,4-beta-xylanase 1</fullName>
        <shortName evidence="12">EX 1</shortName>
        <shortName evidence="13">Xylanase 1</shortName>
        <ecNumber evidence="8 10">3.2.1.8</ecNumber>
    </recommendedName>
    <alternativeName>
        <fullName evidence="11">1,4-beta-D-xylan xylanohydrolase 1</fullName>
    </alternativeName>
    <alternativeName>
        <fullName evidence="12">Acidic endo-beta-1,4-xylanase</fullName>
    </alternativeName>
</protein>
<proteinExistence type="evidence at protein level"/>
<organism>
    <name type="scientific">Hypocrea jecorina (strain ATCC 56765 / BCRC 32924 / NRRL 11460 / Rut C-30)</name>
    <name type="common">Trichoderma reesei</name>
    <dbReference type="NCBI Taxonomy" id="1344414"/>
    <lineage>
        <taxon>Eukaryota</taxon>
        <taxon>Fungi</taxon>
        <taxon>Dikarya</taxon>
        <taxon>Ascomycota</taxon>
        <taxon>Pezizomycotina</taxon>
        <taxon>Sordariomycetes</taxon>
        <taxon>Hypocreomycetidae</taxon>
        <taxon>Hypocreales</taxon>
        <taxon>Hypocreaceae</taxon>
        <taxon>Trichoderma</taxon>
    </lineage>
</organism>
<dbReference type="EC" id="3.2.1.8" evidence="8 10"/>
<dbReference type="EMBL" id="X69574">
    <property type="protein sequence ID" value="CAA49294.1"/>
    <property type="molecule type" value="Genomic_DNA"/>
</dbReference>
<dbReference type="EMBL" id="KI911162">
    <property type="protein sequence ID" value="ETR98398.1"/>
    <property type="molecule type" value="Genomic_DNA"/>
</dbReference>
<dbReference type="PIR" id="S39155">
    <property type="entry name" value="S39155"/>
</dbReference>
<dbReference type="PDB" id="1XYN">
    <property type="method" value="X-ray"/>
    <property type="resolution" value="2.00 A"/>
    <property type="chains" value="A=52-229"/>
</dbReference>
<dbReference type="PDBsum" id="1XYN"/>
<dbReference type="SMR" id="P36218"/>
<dbReference type="CAZy" id="GH11">
    <property type="family name" value="Glycoside Hydrolase Family 11"/>
</dbReference>
<dbReference type="GlyCosmos" id="P36218">
    <property type="glycosylation" value="1 site, No reported glycans"/>
</dbReference>
<dbReference type="KEGG" id="trr:M419DRAFT_38418"/>
<dbReference type="OrthoDB" id="12750at5129"/>
<dbReference type="BRENDA" id="3.2.1.8">
    <property type="organism ID" value="6451"/>
</dbReference>
<dbReference type="UniPathway" id="UPA00114"/>
<dbReference type="EvolutionaryTrace" id="P36218"/>
<dbReference type="Proteomes" id="UP000024376">
    <property type="component" value="Unassembled WGS sequence"/>
</dbReference>
<dbReference type="GO" id="GO:0005576">
    <property type="term" value="C:extracellular region"/>
    <property type="evidence" value="ECO:0007669"/>
    <property type="project" value="UniProtKB-SubCell"/>
</dbReference>
<dbReference type="GO" id="GO:0031176">
    <property type="term" value="F:endo-1,4-beta-xylanase activity"/>
    <property type="evidence" value="ECO:0007669"/>
    <property type="project" value="UniProtKB-EC"/>
</dbReference>
<dbReference type="GO" id="GO:0045493">
    <property type="term" value="P:xylan catabolic process"/>
    <property type="evidence" value="ECO:0007669"/>
    <property type="project" value="UniProtKB-UniPathway"/>
</dbReference>
<dbReference type="FunFam" id="2.60.120.180:FF:000002">
    <property type="entry name" value="Endo-1,4-beta-xylanase A"/>
    <property type="match status" value="1"/>
</dbReference>
<dbReference type="Gene3D" id="2.60.120.180">
    <property type="match status" value="1"/>
</dbReference>
<dbReference type="InterPro" id="IPR013320">
    <property type="entry name" value="ConA-like_dom_sf"/>
</dbReference>
<dbReference type="InterPro" id="IPR013319">
    <property type="entry name" value="GH11/12"/>
</dbReference>
<dbReference type="InterPro" id="IPR018208">
    <property type="entry name" value="GH11_AS_1"/>
</dbReference>
<dbReference type="InterPro" id="IPR033119">
    <property type="entry name" value="GH11_AS_2"/>
</dbReference>
<dbReference type="InterPro" id="IPR033123">
    <property type="entry name" value="GH11_dom"/>
</dbReference>
<dbReference type="InterPro" id="IPR001137">
    <property type="entry name" value="Glyco_hydro_11"/>
</dbReference>
<dbReference type="PANTHER" id="PTHR46828:SF4">
    <property type="entry name" value="ENDO-1,4-BETA-XYLANASE"/>
    <property type="match status" value="1"/>
</dbReference>
<dbReference type="PANTHER" id="PTHR46828">
    <property type="entry name" value="ENDO-1,4-BETA-XYLANASE A-RELATED"/>
    <property type="match status" value="1"/>
</dbReference>
<dbReference type="Pfam" id="PF00457">
    <property type="entry name" value="Glyco_hydro_11"/>
    <property type="match status" value="1"/>
</dbReference>
<dbReference type="PRINTS" id="PR00911">
    <property type="entry name" value="GLHYDRLASE11"/>
</dbReference>
<dbReference type="SUPFAM" id="SSF49899">
    <property type="entry name" value="Concanavalin A-like lectins/glucanases"/>
    <property type="match status" value="1"/>
</dbReference>
<dbReference type="PROSITE" id="PS00776">
    <property type="entry name" value="GH11_1"/>
    <property type="match status" value="1"/>
</dbReference>
<dbReference type="PROSITE" id="PS00777">
    <property type="entry name" value="GH11_2"/>
    <property type="match status" value="1"/>
</dbReference>
<dbReference type="PROSITE" id="PS51761">
    <property type="entry name" value="GH11_3"/>
    <property type="match status" value="1"/>
</dbReference>
<gene>
    <name evidence="11" type="primary">xyn1</name>
    <name type="ORF">M419DRAFT_38418</name>
</gene>
<comment type="function">
    <text evidence="8 9 10">Glycoside hydrolase involved in the hydrolysis of xylan, a major plant cell wall hemicellulose made up of 1,4-beta-linked D-xylopyranose residues. Catalyzes the endohydrolysis of the main-chain 1,4-beta-glycosidic bonds connecting the xylose subunits yielding various xylooligosaccharides and xylose (PubMed:1369024, Ref.3). The catalysis proceeds by a double-displacement reaction mechanism with a putative covalent glycosyl-enzyme intermediate, with retention of the anomeric configuration (PubMed:7988708).</text>
</comment>
<comment type="catalytic activity">
    <reaction evidence="8 10">
        <text>Endohydrolysis of (1-&gt;4)-beta-D-xylosidic linkages in xylans.</text>
        <dbReference type="EC" id="3.2.1.8"/>
    </reaction>
</comment>
<comment type="biophysicochemical properties">
    <kinetics>
        <KM evidence="8">0.22 mg/ml for beechwood (unsubstituted) xylan</KM>
        <KM evidence="10">14.8 mg/ml for acetylated glucuronoxylan</KM>
        <KM evidence="10">22.3 mg/ml for deacetylated glucuronoxylan</KM>
        <KM evidence="10">18.9 mg/ml for unsubstituted xylan</KM>
        <Vmax evidence="8">100.0 umol/min/mg enzyme for beechwood xylan</Vmax>
    </kinetics>
    <phDependence>
        <text evidence="8 10">Optimum pH is 3.5-4.0 (PubMed:1369024). Stable from pH 2.5 to 8.5 at room temperature and from pH 2.5 to 4.5 at 40 degrees Celsius (Ref.3).</text>
    </phDependence>
</comment>
<comment type="pathway">
    <text evidence="5">Glycan degradation; xylan degradation.</text>
</comment>
<comment type="subcellular location">
    <subcellularLocation>
        <location evidence="10">Secreted</location>
    </subcellularLocation>
</comment>
<comment type="induction">
    <text evidence="1">Induced by D-xylose and L-arabinose, dependent on the cellulase and xylanase regulator xyr1. Repressed by glucose through negative regulation by the crabon catabolite repressor cre1.</text>
</comment>
<comment type="similarity">
    <text evidence="14">Belongs to the glycosyl hydrolase 11 (cellulase G) family.</text>
</comment>
<comment type="caution">
    <text evidence="15">In PubMed:1369024 Figure 3, this sequence is erroneously labeled xyn2, but in the remainder of the paper and all subsequent publications, this protein is referred to as xylanase 1 (xyn1).</text>
</comment>
<evidence type="ECO:0000250" key="1">
    <source>
        <dbReference type="UniProtKB" id="G0R947"/>
    </source>
</evidence>
<evidence type="ECO:0000250" key="2">
    <source>
        <dbReference type="UniProtKB" id="P36217"/>
    </source>
</evidence>
<evidence type="ECO:0000255" key="3"/>
<evidence type="ECO:0000255" key="4">
    <source>
        <dbReference type="PROSITE-ProRule" id="PRU00498"/>
    </source>
</evidence>
<evidence type="ECO:0000255" key="5">
    <source>
        <dbReference type="PROSITE-ProRule" id="PRU01097"/>
    </source>
</evidence>
<evidence type="ECO:0000255" key="6">
    <source>
        <dbReference type="PROSITE-ProRule" id="PRU10062"/>
    </source>
</evidence>
<evidence type="ECO:0000255" key="7">
    <source>
        <dbReference type="PROSITE-ProRule" id="PRU10063"/>
    </source>
</evidence>
<evidence type="ECO:0000269" key="8">
    <source>
    </source>
</evidence>
<evidence type="ECO:0000269" key="9">
    <source>
    </source>
</evidence>
<evidence type="ECO:0000269" key="10">
    <source ref="3"/>
</evidence>
<evidence type="ECO:0000303" key="11">
    <source>
    </source>
</evidence>
<evidence type="ECO:0000303" key="12">
    <source>
    </source>
</evidence>
<evidence type="ECO:0000303" key="13">
    <source ref="3"/>
</evidence>
<evidence type="ECO:0000305" key="14"/>
<evidence type="ECO:0000305" key="15">
    <source>
    </source>
</evidence>
<evidence type="ECO:0007829" key="16">
    <source>
        <dbReference type="PDB" id="1XYN"/>
    </source>
</evidence>